<feature type="chain" id="PRO_0000208952" description="N-acylglucosamine 2-epimerase">
    <location>
        <begin position="1"/>
        <end position="419"/>
    </location>
</feature>
<feature type="region of interest" description="Leucine-zipper">
    <location>
        <begin position="185"/>
        <end position="206"/>
    </location>
</feature>
<feature type="site" description="Important for enzyme activity" evidence="1">
    <location>
        <position position="380"/>
    </location>
</feature>
<feature type="modified residue" description="Phosphoserine" evidence="2">
    <location>
        <position position="418"/>
    </location>
</feature>
<evidence type="ECO:0000250" key="1">
    <source>
        <dbReference type="UniProtKB" id="P51606"/>
    </source>
</evidence>
<evidence type="ECO:0000250" key="2">
    <source>
        <dbReference type="UniProtKB" id="P82343"/>
    </source>
</evidence>
<evidence type="ECO:0000269" key="3">
    <source>
    </source>
</evidence>
<evidence type="ECO:0000269" key="4">
    <source>
    </source>
</evidence>
<evidence type="ECO:0000305" key="5"/>
<sequence length="419" mass="48391">MEKERETLQVWKQRVGQELDSVIAFWMEHSHDQEHGGFFTCLGRDGQVYDHLKYVWLQGRQVWMYCRLYRTFERFRRVELLDAAKAGGEFLLSYARVAPPGKKCAFVLTQDGRPVKVQRTIFSECFYTMAMNELWKVTGEMHYQREAVEMMDQIIHWVREDPAGLGRPQLSGTLATEPMAVPMMLLNLVEQLGEEDEEMTDKYAELGDWCAHRILQHVQRDGQVVLENVSEDGKELPGCLGRHQNPGHTLEAGWFLLQYALRKGDPKLQRHIIDKFLLLPFHSGWDPEHGGLFYFQDADDLCPTQLEWNMKLWWPHTEAMIAFLMGYRDSGDPALLNLFYQVAEYTFHQFRDPEYGEWFGYLNQEGKVALTIKGGPFKGCFHVPRCLAMCEQILGALLQRLGPAPLGSLPAVPTREGSK</sequence>
<accession>P51607</accession>
<gene>
    <name type="primary">Renbp</name>
</gene>
<organism>
    <name type="scientific">Rattus norvegicus</name>
    <name type="common">Rat</name>
    <dbReference type="NCBI Taxonomy" id="10116"/>
    <lineage>
        <taxon>Eukaryota</taxon>
        <taxon>Metazoa</taxon>
        <taxon>Chordata</taxon>
        <taxon>Craniata</taxon>
        <taxon>Vertebrata</taxon>
        <taxon>Euteleostomi</taxon>
        <taxon>Mammalia</taxon>
        <taxon>Eutheria</taxon>
        <taxon>Euarchontoglires</taxon>
        <taxon>Glires</taxon>
        <taxon>Rodentia</taxon>
        <taxon>Myomorpha</taxon>
        <taxon>Muroidea</taxon>
        <taxon>Muridae</taxon>
        <taxon>Murinae</taxon>
        <taxon>Rattus</taxon>
    </lineage>
</organism>
<keyword id="KW-0413">Isomerase</keyword>
<keyword id="KW-0597">Phosphoprotein</keyword>
<keyword id="KW-1185">Reference proteome</keyword>
<dbReference type="EC" id="5.1.3.8" evidence="1"/>
<dbReference type="EMBL" id="CB691242">
    <property type="status" value="NOT_ANNOTATED_CDS"/>
    <property type="molecule type" value="mRNA"/>
</dbReference>
<dbReference type="EMBL" id="D10233">
    <property type="protein sequence ID" value="BAA01083.1"/>
    <property type="molecule type" value="mRNA"/>
</dbReference>
<dbReference type="PIR" id="JX0187">
    <property type="entry name" value="JX0187"/>
</dbReference>
<dbReference type="RefSeq" id="NP_112357.1">
    <property type="nucleotide sequence ID" value="NM_031095.1"/>
</dbReference>
<dbReference type="SMR" id="P51607"/>
<dbReference type="FunCoup" id="P51607">
    <property type="interactions" value="180"/>
</dbReference>
<dbReference type="STRING" id="10116.ENSRNOP00000069721"/>
<dbReference type="PhosphoSitePlus" id="P51607"/>
<dbReference type="jPOST" id="P51607"/>
<dbReference type="PaxDb" id="10116-ENSRNOP00000053175"/>
<dbReference type="GeneID" id="81759"/>
<dbReference type="KEGG" id="rno:81759"/>
<dbReference type="AGR" id="RGD:621688"/>
<dbReference type="CTD" id="5973"/>
<dbReference type="RGD" id="621688">
    <property type="gene designation" value="Renbp"/>
</dbReference>
<dbReference type="eggNOG" id="ENOG502QSDA">
    <property type="taxonomic scope" value="Eukaryota"/>
</dbReference>
<dbReference type="HOGENOM" id="CLU_046651_0_0_1"/>
<dbReference type="InParanoid" id="P51607"/>
<dbReference type="OrthoDB" id="61659at9989"/>
<dbReference type="PhylomeDB" id="P51607"/>
<dbReference type="Reactome" id="R-RNO-446210">
    <property type="pathway name" value="Synthesis of UDP-N-acetyl-glucosamine"/>
</dbReference>
<dbReference type="UniPathway" id="UPA00629"/>
<dbReference type="PRO" id="PR:P51607"/>
<dbReference type="Proteomes" id="UP000002494">
    <property type="component" value="Chromosome X"/>
</dbReference>
<dbReference type="Bgee" id="ENSRNOG00000054765">
    <property type="expression patterns" value="Expressed in adult mammalian kidney and 19 other cell types or tissues"/>
</dbReference>
<dbReference type="GO" id="GO:0005524">
    <property type="term" value="F:ATP binding"/>
    <property type="evidence" value="ECO:0000314"/>
    <property type="project" value="RGD"/>
</dbReference>
<dbReference type="GO" id="GO:0004857">
    <property type="term" value="F:enzyme inhibitor activity"/>
    <property type="evidence" value="ECO:0000314"/>
    <property type="project" value="RGD"/>
</dbReference>
<dbReference type="GO" id="GO:0042802">
    <property type="term" value="F:identical protein binding"/>
    <property type="evidence" value="ECO:0000314"/>
    <property type="project" value="UniProtKB"/>
</dbReference>
<dbReference type="GO" id="GO:0050121">
    <property type="term" value="F:N-acylglucosamine 2-epimerase activity"/>
    <property type="evidence" value="ECO:0000314"/>
    <property type="project" value="RGD"/>
</dbReference>
<dbReference type="GO" id="GO:0030414">
    <property type="term" value="F:peptidase inhibitor activity"/>
    <property type="evidence" value="ECO:0000250"/>
    <property type="project" value="UniProtKB"/>
</dbReference>
<dbReference type="GO" id="GO:0017076">
    <property type="term" value="F:purine nucleotide binding"/>
    <property type="evidence" value="ECO:0000314"/>
    <property type="project" value="RGD"/>
</dbReference>
<dbReference type="GO" id="GO:0005975">
    <property type="term" value="P:carbohydrate metabolic process"/>
    <property type="evidence" value="ECO:0007669"/>
    <property type="project" value="InterPro"/>
</dbReference>
<dbReference type="GO" id="GO:0006044">
    <property type="term" value="P:N-acetylglucosamine metabolic process"/>
    <property type="evidence" value="ECO:0000314"/>
    <property type="project" value="RGD"/>
</dbReference>
<dbReference type="GO" id="GO:0006051">
    <property type="term" value="P:N-acetylmannosamine metabolic process"/>
    <property type="evidence" value="ECO:0000314"/>
    <property type="project" value="RGD"/>
</dbReference>
<dbReference type="GO" id="GO:0019262">
    <property type="term" value="P:N-acetylneuraminate catabolic process"/>
    <property type="evidence" value="ECO:0007669"/>
    <property type="project" value="UniProtKB-UniPathway"/>
</dbReference>
<dbReference type="CDD" id="cd00249">
    <property type="entry name" value="AGE"/>
    <property type="match status" value="1"/>
</dbReference>
<dbReference type="FunFam" id="1.50.10.10:FF:000021">
    <property type="entry name" value="N-acylglucosamine 2-epimerase"/>
    <property type="match status" value="1"/>
</dbReference>
<dbReference type="Gene3D" id="1.50.10.10">
    <property type="match status" value="1"/>
</dbReference>
<dbReference type="InterPro" id="IPR008928">
    <property type="entry name" value="6-hairpin_glycosidase_sf"/>
</dbReference>
<dbReference type="InterPro" id="IPR012341">
    <property type="entry name" value="6hp_glycosidase-like_sf"/>
</dbReference>
<dbReference type="InterPro" id="IPR010819">
    <property type="entry name" value="AGE/CE"/>
</dbReference>
<dbReference type="InterPro" id="IPR034116">
    <property type="entry name" value="AGE_dom"/>
</dbReference>
<dbReference type="PANTHER" id="PTHR15108">
    <property type="entry name" value="N-ACYLGLUCOSAMINE-2-EPIMERASE"/>
    <property type="match status" value="1"/>
</dbReference>
<dbReference type="Pfam" id="PF07221">
    <property type="entry name" value="GlcNAc_2-epim"/>
    <property type="match status" value="1"/>
</dbReference>
<dbReference type="SUPFAM" id="SSF48208">
    <property type="entry name" value="Six-hairpin glycosidases"/>
    <property type="match status" value="1"/>
</dbReference>
<reference key="1">
    <citation type="submission" date="2003-04" db="EMBL/GenBank/DDBJ databases">
        <title>Amgen rat EST program.</title>
        <authorList>
            <consortium name="Amgen EST program"/>
        </authorList>
    </citation>
    <scope>NUCLEOTIDE SEQUENCE [LARGE SCALE MRNA] OF 1-106</scope>
</reference>
<reference key="2">
    <citation type="journal article" date="1991" name="J. Biochem.">
        <title>Genetic and molecular properties of human and rat renin-binding proteins with reference to the function of the leucine zipper motif.</title>
        <authorList>
            <person name="Inoue H."/>
            <person name="Takahashi S."/>
            <person name="Fukui K."/>
            <person name="Miyake Y."/>
        </authorList>
    </citation>
    <scope>NUCLEOTIDE SEQUENCE [MRNA]</scope>
    <scope>SUBUNIT</scope>
</reference>
<reference key="3">
    <citation type="journal article" date="1992" name="J. Biochem.">
        <title>Tissue-specific regulation of renin-binding protein gene expression in rats.</title>
        <authorList>
            <person name="Tada M."/>
            <person name="Takahashi S."/>
            <person name="Miyano M."/>
            <person name="Miyake Y."/>
        </authorList>
    </citation>
    <scope>TISSUE SPECIFICITY</scope>
</reference>
<proteinExistence type="evidence at protein level"/>
<name>RENBP_RAT</name>
<protein>
    <recommendedName>
        <fullName>N-acylglucosamine 2-epimerase</fullName>
        <shortName>AGE</shortName>
        <ecNumber evidence="1">5.1.3.8</ecNumber>
    </recommendedName>
    <alternativeName>
        <fullName>GlcNAc 2-epimerase</fullName>
    </alternativeName>
    <alternativeName>
        <fullName>N-acetyl-D-glucosamine 2-epimerase</fullName>
    </alternativeName>
    <alternativeName>
        <fullName>Renin-binding protein</fullName>
        <shortName>RnBP</shortName>
    </alternativeName>
</protein>
<comment type="function">
    <text evidence="2">Catalyzes the interconversion of N-acetylglucosamine to N-acetylmannosamine. Involved in the N-glycolylneuraminic acid (Neu5Gc) degradation pathway.</text>
</comment>
<comment type="catalytic activity">
    <reaction evidence="1">
        <text>an N-acyl-D-glucosamine = an N-acyl-D-mannosamine</text>
        <dbReference type="Rhea" id="RHEA:19033"/>
        <dbReference type="ChEBI" id="CHEBI:16062"/>
        <dbReference type="ChEBI" id="CHEBI:17274"/>
        <dbReference type="EC" id="5.1.3.8"/>
    </reaction>
    <physiologicalReaction direction="left-to-right" evidence="1">
        <dbReference type="Rhea" id="RHEA:19034"/>
    </physiologicalReaction>
    <physiologicalReaction direction="right-to-left" evidence="1">
        <dbReference type="Rhea" id="RHEA:19035"/>
    </physiologicalReaction>
</comment>
<comment type="pathway">
    <text evidence="1">Amino-sugar metabolism; N-acetylneuraminate degradation.</text>
</comment>
<comment type="subunit">
    <text evidence="4">Homodimer (PubMed:1723410). Forms a heterodimer with renin and inhibits its activity (PubMed:1723410).</text>
</comment>
<comment type="tissue specificity">
    <text evidence="3 4">Kidney, adrenal gland, brain, lung, spleen, ovary, testis and heart.</text>
</comment>
<comment type="similarity">
    <text evidence="5">Belongs to the N-acylglucosamine 2-epimerase family.</text>
</comment>